<gene>
    <name evidence="1" type="primary">pyrH</name>
    <name type="ordered locus">SAG1513</name>
</gene>
<proteinExistence type="inferred from homology"/>
<sequence length="242" mass="25904">MEPKYQRILIKLSGEALAGDKGVGIDIPTVQSIAKEIAEVHNSGVQIALVIGGGNLWRGEPAAEAGMDRVQADYTGMLGTVMNALVMADSLQQYGVDTRVQTAIPMQTVAEPYVRGRALRHLEKNRIVVFGAGIGSPYFSTDTTAALRAAEIEAEAILMAKNGVDGVYNADPKKDANAVKFDELTHVEVIKRGLKIMDATASTISMDNDIDLVVFNMNETGNIKRVVLGEQIGTTVSNKASE</sequence>
<keyword id="KW-0021">Allosteric enzyme</keyword>
<keyword id="KW-0067">ATP-binding</keyword>
<keyword id="KW-0963">Cytoplasm</keyword>
<keyword id="KW-0418">Kinase</keyword>
<keyword id="KW-0547">Nucleotide-binding</keyword>
<keyword id="KW-0665">Pyrimidine biosynthesis</keyword>
<keyword id="KW-1185">Reference proteome</keyword>
<keyword id="KW-0808">Transferase</keyword>
<evidence type="ECO:0000255" key="1">
    <source>
        <dbReference type="HAMAP-Rule" id="MF_01220"/>
    </source>
</evidence>
<name>PYRH_STRA5</name>
<accession>Q8DYG8</accession>
<comment type="function">
    <text evidence="1">Catalyzes the reversible phosphorylation of UMP to UDP.</text>
</comment>
<comment type="catalytic activity">
    <reaction evidence="1">
        <text>UMP + ATP = UDP + ADP</text>
        <dbReference type="Rhea" id="RHEA:24400"/>
        <dbReference type="ChEBI" id="CHEBI:30616"/>
        <dbReference type="ChEBI" id="CHEBI:57865"/>
        <dbReference type="ChEBI" id="CHEBI:58223"/>
        <dbReference type="ChEBI" id="CHEBI:456216"/>
        <dbReference type="EC" id="2.7.4.22"/>
    </reaction>
</comment>
<comment type="activity regulation">
    <text evidence="1">Allosterically activated by GTP. Inhibited by UTP.</text>
</comment>
<comment type="pathway">
    <text evidence="1">Pyrimidine metabolism; CTP biosynthesis via de novo pathway; UDP from UMP (UMPK route): step 1/1.</text>
</comment>
<comment type="subunit">
    <text evidence="1">Homohexamer.</text>
</comment>
<comment type="subcellular location">
    <subcellularLocation>
        <location evidence="1">Cytoplasm</location>
    </subcellularLocation>
</comment>
<comment type="similarity">
    <text evidence="1">Belongs to the UMP kinase family.</text>
</comment>
<protein>
    <recommendedName>
        <fullName evidence="1">Uridylate kinase</fullName>
        <shortName evidence="1">UK</shortName>
        <ecNumber evidence="1">2.7.4.22</ecNumber>
    </recommendedName>
    <alternativeName>
        <fullName evidence="1">Uridine monophosphate kinase</fullName>
        <shortName evidence="1">UMP kinase</shortName>
        <shortName evidence="1">UMPK</shortName>
    </alternativeName>
</protein>
<organism>
    <name type="scientific">Streptococcus agalactiae serotype V (strain ATCC BAA-611 / 2603 V/R)</name>
    <dbReference type="NCBI Taxonomy" id="208435"/>
    <lineage>
        <taxon>Bacteria</taxon>
        <taxon>Bacillati</taxon>
        <taxon>Bacillota</taxon>
        <taxon>Bacilli</taxon>
        <taxon>Lactobacillales</taxon>
        <taxon>Streptococcaceae</taxon>
        <taxon>Streptococcus</taxon>
    </lineage>
</organism>
<reference key="1">
    <citation type="journal article" date="2002" name="Proc. Natl. Acad. Sci. U.S.A.">
        <title>Complete genome sequence and comparative genomic analysis of an emerging human pathogen, serotype V Streptococcus agalactiae.</title>
        <authorList>
            <person name="Tettelin H."/>
            <person name="Masignani V."/>
            <person name="Cieslewicz M.J."/>
            <person name="Eisen J.A."/>
            <person name="Peterson S.N."/>
            <person name="Wessels M.R."/>
            <person name="Paulsen I.T."/>
            <person name="Nelson K.E."/>
            <person name="Margarit I."/>
            <person name="Read T.D."/>
            <person name="Madoff L.C."/>
            <person name="Wolf A.M."/>
            <person name="Beanan M.J."/>
            <person name="Brinkac L.M."/>
            <person name="Daugherty S.C."/>
            <person name="DeBoy R.T."/>
            <person name="Durkin A.S."/>
            <person name="Kolonay J.F."/>
            <person name="Madupu R."/>
            <person name="Lewis M.R."/>
            <person name="Radune D."/>
            <person name="Fedorova N.B."/>
            <person name="Scanlan D."/>
            <person name="Khouri H.M."/>
            <person name="Mulligan S."/>
            <person name="Carty H.A."/>
            <person name="Cline R.T."/>
            <person name="Van Aken S.E."/>
            <person name="Gill J."/>
            <person name="Scarselli M."/>
            <person name="Mora M."/>
            <person name="Iacobini E.T."/>
            <person name="Brettoni C."/>
            <person name="Galli G."/>
            <person name="Mariani M."/>
            <person name="Vegni F."/>
            <person name="Maione D."/>
            <person name="Rinaudo D."/>
            <person name="Rappuoli R."/>
            <person name="Telford J.L."/>
            <person name="Kasper D.L."/>
            <person name="Grandi G."/>
            <person name="Fraser C.M."/>
        </authorList>
    </citation>
    <scope>NUCLEOTIDE SEQUENCE [LARGE SCALE GENOMIC DNA]</scope>
    <source>
        <strain>ATCC BAA-611 / 2603 V/R</strain>
    </source>
</reference>
<feature type="chain" id="PRO_1000054029" description="Uridylate kinase">
    <location>
        <begin position="1"/>
        <end position="242"/>
    </location>
</feature>
<feature type="region of interest" description="Involved in allosteric activation by GTP" evidence="1">
    <location>
        <begin position="19"/>
        <end position="24"/>
    </location>
</feature>
<feature type="binding site" evidence="1">
    <location>
        <begin position="11"/>
        <end position="14"/>
    </location>
    <ligand>
        <name>ATP</name>
        <dbReference type="ChEBI" id="CHEBI:30616"/>
    </ligand>
</feature>
<feature type="binding site" evidence="1">
    <location>
        <position position="53"/>
    </location>
    <ligand>
        <name>UMP</name>
        <dbReference type="ChEBI" id="CHEBI:57865"/>
    </ligand>
</feature>
<feature type="binding site" evidence="1">
    <location>
        <position position="54"/>
    </location>
    <ligand>
        <name>ATP</name>
        <dbReference type="ChEBI" id="CHEBI:30616"/>
    </ligand>
</feature>
<feature type="binding site" evidence="1">
    <location>
        <position position="58"/>
    </location>
    <ligand>
        <name>ATP</name>
        <dbReference type="ChEBI" id="CHEBI:30616"/>
    </ligand>
</feature>
<feature type="binding site" evidence="1">
    <location>
        <position position="73"/>
    </location>
    <ligand>
        <name>UMP</name>
        <dbReference type="ChEBI" id="CHEBI:57865"/>
    </ligand>
</feature>
<feature type="binding site" evidence="1">
    <location>
        <begin position="134"/>
        <end position="141"/>
    </location>
    <ligand>
        <name>UMP</name>
        <dbReference type="ChEBI" id="CHEBI:57865"/>
    </ligand>
</feature>
<feature type="binding site" evidence="1">
    <location>
        <position position="162"/>
    </location>
    <ligand>
        <name>ATP</name>
        <dbReference type="ChEBI" id="CHEBI:30616"/>
    </ligand>
</feature>
<feature type="binding site" evidence="1">
    <location>
        <position position="168"/>
    </location>
    <ligand>
        <name>ATP</name>
        <dbReference type="ChEBI" id="CHEBI:30616"/>
    </ligand>
</feature>
<feature type="binding site" evidence="1">
    <location>
        <position position="171"/>
    </location>
    <ligand>
        <name>ATP</name>
        <dbReference type="ChEBI" id="CHEBI:30616"/>
    </ligand>
</feature>
<dbReference type="EC" id="2.7.4.22" evidence="1"/>
<dbReference type="EMBL" id="AE009948">
    <property type="protein sequence ID" value="AAN00380.1"/>
    <property type="molecule type" value="Genomic_DNA"/>
</dbReference>
<dbReference type="RefSeq" id="NP_688507.1">
    <property type="nucleotide sequence ID" value="NC_004116.1"/>
</dbReference>
<dbReference type="RefSeq" id="WP_000433491.1">
    <property type="nucleotide sequence ID" value="NC_004116.1"/>
</dbReference>
<dbReference type="SMR" id="Q8DYG8"/>
<dbReference type="STRING" id="208435.SAG1513"/>
<dbReference type="GeneID" id="66886368"/>
<dbReference type="KEGG" id="sag:SAG1513"/>
<dbReference type="PATRIC" id="fig|208435.3.peg.1522"/>
<dbReference type="HOGENOM" id="CLU_033861_0_0_9"/>
<dbReference type="OrthoDB" id="9807458at2"/>
<dbReference type="UniPathway" id="UPA00159">
    <property type="reaction ID" value="UER00275"/>
</dbReference>
<dbReference type="Proteomes" id="UP000000821">
    <property type="component" value="Chromosome"/>
</dbReference>
<dbReference type="GO" id="GO:0005737">
    <property type="term" value="C:cytoplasm"/>
    <property type="evidence" value="ECO:0007669"/>
    <property type="project" value="UniProtKB-SubCell"/>
</dbReference>
<dbReference type="GO" id="GO:0005524">
    <property type="term" value="F:ATP binding"/>
    <property type="evidence" value="ECO:0007669"/>
    <property type="project" value="UniProtKB-KW"/>
</dbReference>
<dbReference type="GO" id="GO:0033862">
    <property type="term" value="F:UMP kinase activity"/>
    <property type="evidence" value="ECO:0007669"/>
    <property type="project" value="UniProtKB-EC"/>
</dbReference>
<dbReference type="GO" id="GO:0044210">
    <property type="term" value="P:'de novo' CTP biosynthetic process"/>
    <property type="evidence" value="ECO:0007669"/>
    <property type="project" value="UniProtKB-UniRule"/>
</dbReference>
<dbReference type="GO" id="GO:0006225">
    <property type="term" value="P:UDP biosynthetic process"/>
    <property type="evidence" value="ECO:0007669"/>
    <property type="project" value="TreeGrafter"/>
</dbReference>
<dbReference type="CDD" id="cd04254">
    <property type="entry name" value="AAK_UMPK-PyrH-Ec"/>
    <property type="match status" value="1"/>
</dbReference>
<dbReference type="FunFam" id="3.40.1160.10:FF:000019">
    <property type="entry name" value="Uridylate kinase"/>
    <property type="match status" value="1"/>
</dbReference>
<dbReference type="Gene3D" id="3.40.1160.10">
    <property type="entry name" value="Acetylglutamate kinase-like"/>
    <property type="match status" value="1"/>
</dbReference>
<dbReference type="HAMAP" id="MF_01220_B">
    <property type="entry name" value="PyrH_B"/>
    <property type="match status" value="1"/>
</dbReference>
<dbReference type="InterPro" id="IPR036393">
    <property type="entry name" value="AceGlu_kinase-like_sf"/>
</dbReference>
<dbReference type="InterPro" id="IPR001048">
    <property type="entry name" value="Asp/Glu/Uridylate_kinase"/>
</dbReference>
<dbReference type="InterPro" id="IPR011817">
    <property type="entry name" value="Uridylate_kinase"/>
</dbReference>
<dbReference type="InterPro" id="IPR015963">
    <property type="entry name" value="Uridylate_kinase_bac"/>
</dbReference>
<dbReference type="NCBIfam" id="TIGR02075">
    <property type="entry name" value="pyrH_bact"/>
    <property type="match status" value="1"/>
</dbReference>
<dbReference type="PANTHER" id="PTHR42833">
    <property type="entry name" value="URIDYLATE KINASE"/>
    <property type="match status" value="1"/>
</dbReference>
<dbReference type="PANTHER" id="PTHR42833:SF4">
    <property type="entry name" value="URIDYLATE KINASE PUMPKIN, CHLOROPLASTIC"/>
    <property type="match status" value="1"/>
</dbReference>
<dbReference type="Pfam" id="PF00696">
    <property type="entry name" value="AA_kinase"/>
    <property type="match status" value="1"/>
</dbReference>
<dbReference type="PIRSF" id="PIRSF005650">
    <property type="entry name" value="Uridylate_kin"/>
    <property type="match status" value="1"/>
</dbReference>
<dbReference type="SUPFAM" id="SSF53633">
    <property type="entry name" value="Carbamate kinase-like"/>
    <property type="match status" value="1"/>
</dbReference>